<accession>Q141D2</accession>
<keyword id="KW-0056">Arginine metabolism</keyword>
<keyword id="KW-0378">Hydrolase</keyword>
<keyword id="KW-1185">Reference proteome</keyword>
<organism>
    <name type="scientific">Paraburkholderia xenovorans (strain LB400)</name>
    <dbReference type="NCBI Taxonomy" id="266265"/>
    <lineage>
        <taxon>Bacteria</taxon>
        <taxon>Pseudomonadati</taxon>
        <taxon>Pseudomonadota</taxon>
        <taxon>Betaproteobacteria</taxon>
        <taxon>Burkholderiales</taxon>
        <taxon>Burkholderiaceae</taxon>
        <taxon>Paraburkholderia</taxon>
    </lineage>
</organism>
<dbReference type="EC" id="3.5.3.23" evidence="1"/>
<dbReference type="EMBL" id="CP000270">
    <property type="protein sequence ID" value="ABE30057.1"/>
    <property type="molecule type" value="Genomic_DNA"/>
</dbReference>
<dbReference type="RefSeq" id="WP_011487767.1">
    <property type="nucleotide sequence ID" value="NC_007951.1"/>
</dbReference>
<dbReference type="SMR" id="Q141D2"/>
<dbReference type="STRING" id="266265.Bxe_A2919"/>
<dbReference type="KEGG" id="bxb:DR64_601"/>
<dbReference type="KEGG" id="bxe:Bxe_A2919"/>
<dbReference type="PATRIC" id="fig|266265.5.peg.1570"/>
<dbReference type="eggNOG" id="COG3724">
    <property type="taxonomic scope" value="Bacteria"/>
</dbReference>
<dbReference type="OrthoDB" id="248552at2"/>
<dbReference type="UniPathway" id="UPA00185">
    <property type="reaction ID" value="UER00280"/>
</dbReference>
<dbReference type="Proteomes" id="UP000001817">
    <property type="component" value="Chromosome 1"/>
</dbReference>
<dbReference type="GO" id="GO:0009015">
    <property type="term" value="F:N-succinylarginine dihydrolase activity"/>
    <property type="evidence" value="ECO:0007669"/>
    <property type="project" value="UniProtKB-UniRule"/>
</dbReference>
<dbReference type="GO" id="GO:0019544">
    <property type="term" value="P:arginine catabolic process to glutamate"/>
    <property type="evidence" value="ECO:0007669"/>
    <property type="project" value="UniProtKB-UniRule"/>
</dbReference>
<dbReference type="GO" id="GO:0019545">
    <property type="term" value="P:arginine catabolic process to succinate"/>
    <property type="evidence" value="ECO:0007669"/>
    <property type="project" value="UniProtKB-UniRule"/>
</dbReference>
<dbReference type="Gene3D" id="3.75.10.20">
    <property type="entry name" value="Succinylarginine dihydrolase"/>
    <property type="match status" value="1"/>
</dbReference>
<dbReference type="HAMAP" id="MF_01172">
    <property type="entry name" value="AstB"/>
    <property type="match status" value="1"/>
</dbReference>
<dbReference type="InterPro" id="IPR037031">
    <property type="entry name" value="AstB_sf"/>
</dbReference>
<dbReference type="InterPro" id="IPR007079">
    <property type="entry name" value="SuccinylArg_d-Hdrlase_AstB"/>
</dbReference>
<dbReference type="NCBIfam" id="TIGR03241">
    <property type="entry name" value="arg_catab_astB"/>
    <property type="match status" value="1"/>
</dbReference>
<dbReference type="NCBIfam" id="NF009789">
    <property type="entry name" value="PRK13281.1"/>
    <property type="match status" value="1"/>
</dbReference>
<dbReference type="PANTHER" id="PTHR30420">
    <property type="entry name" value="N-SUCCINYLARGININE DIHYDROLASE"/>
    <property type="match status" value="1"/>
</dbReference>
<dbReference type="PANTHER" id="PTHR30420:SF2">
    <property type="entry name" value="N-SUCCINYLARGININE DIHYDROLASE"/>
    <property type="match status" value="1"/>
</dbReference>
<dbReference type="Pfam" id="PF04996">
    <property type="entry name" value="AstB"/>
    <property type="match status" value="1"/>
</dbReference>
<dbReference type="SUPFAM" id="SSF55909">
    <property type="entry name" value="Pentein"/>
    <property type="match status" value="1"/>
</dbReference>
<protein>
    <recommendedName>
        <fullName evidence="1">N-succinylarginine dihydrolase</fullName>
        <ecNumber evidence="1">3.5.3.23</ecNumber>
    </recommendedName>
</protein>
<proteinExistence type="inferred from homology"/>
<evidence type="ECO:0000255" key="1">
    <source>
        <dbReference type="HAMAP-Rule" id="MF_01172"/>
    </source>
</evidence>
<comment type="function">
    <text evidence="1">Catalyzes the hydrolysis of N(2)-succinylarginine into N(2)-succinylornithine, ammonia and CO(2).</text>
</comment>
<comment type="catalytic activity">
    <reaction evidence="1">
        <text>N(2)-succinyl-L-arginine + 2 H2O + 2 H(+) = N(2)-succinyl-L-ornithine + 2 NH4(+) + CO2</text>
        <dbReference type="Rhea" id="RHEA:19533"/>
        <dbReference type="ChEBI" id="CHEBI:15377"/>
        <dbReference type="ChEBI" id="CHEBI:15378"/>
        <dbReference type="ChEBI" id="CHEBI:16526"/>
        <dbReference type="ChEBI" id="CHEBI:28938"/>
        <dbReference type="ChEBI" id="CHEBI:58241"/>
        <dbReference type="ChEBI" id="CHEBI:58514"/>
        <dbReference type="EC" id="3.5.3.23"/>
    </reaction>
</comment>
<comment type="pathway">
    <text evidence="1">Amino-acid degradation; L-arginine degradation via AST pathway; L-glutamate and succinate from L-arginine: step 2/5.</text>
</comment>
<comment type="subunit">
    <text evidence="1">Homodimer.</text>
</comment>
<comment type="similarity">
    <text evidence="1">Belongs to the succinylarginine dihydrolase family.</text>
</comment>
<name>ASTB_PARXL</name>
<sequence length="446" mass="48896">MQATEANFDGLVGPTHNYAGLSFGNVASQNNEKSVANPKAAAKQGLRKMKQLADLGFHQGVLPPQERPSMRLLRELGFSGDDATVIARVARDAPELLAAASSASAMWTANAATVSPSADTNDGRVHFTPANLCSKLHRAIEHESTRRTLRTMFNDTDRFVVHEALPGTPALGDEGAANHTRFCEEYGARGVEFFVYGRSEYRRGPEPKRFPARQSFEASRAVAHRHGLADEATVYAQQNPDVIDAGVFHNDVIAVGNRNTLFCHQFAFVEPNAVYDELRAKLSGLKAAFNVIEVPDAQVSVADAVSSYLFNSQLLTRPDGKQVLVVPQECRENPRVAAYLDDLTSRTGPIDDVLVFDLRESMKNGGGPACLRLRVVLDDAERAAVTPGVWIDDTLFGRLDAWIEKHYRDRLAPADLTDPHLLAESRTALDELTQILGLGSLYDFQR</sequence>
<reference key="1">
    <citation type="journal article" date="2006" name="Proc. Natl. Acad. Sci. U.S.A.">
        <title>Burkholderia xenovorans LB400 harbors a multi-replicon, 9.73-Mbp genome shaped for versatility.</title>
        <authorList>
            <person name="Chain P.S.G."/>
            <person name="Denef V.J."/>
            <person name="Konstantinidis K.T."/>
            <person name="Vergez L.M."/>
            <person name="Agullo L."/>
            <person name="Reyes V.L."/>
            <person name="Hauser L."/>
            <person name="Cordova M."/>
            <person name="Gomez L."/>
            <person name="Gonzalez M."/>
            <person name="Land M."/>
            <person name="Lao V."/>
            <person name="Larimer F."/>
            <person name="LiPuma J.J."/>
            <person name="Mahenthiralingam E."/>
            <person name="Malfatti S.A."/>
            <person name="Marx C.J."/>
            <person name="Parnell J.J."/>
            <person name="Ramette A."/>
            <person name="Richardson P."/>
            <person name="Seeger M."/>
            <person name="Smith D."/>
            <person name="Spilker T."/>
            <person name="Sul W.J."/>
            <person name="Tsoi T.V."/>
            <person name="Ulrich L.E."/>
            <person name="Zhulin I.B."/>
            <person name="Tiedje J.M."/>
        </authorList>
    </citation>
    <scope>NUCLEOTIDE SEQUENCE [LARGE SCALE GENOMIC DNA]</scope>
    <source>
        <strain>LB400</strain>
    </source>
</reference>
<feature type="chain" id="PRO_0000262344" description="N-succinylarginine dihydrolase">
    <location>
        <begin position="1"/>
        <end position="446"/>
    </location>
</feature>
<feature type="active site" evidence="1">
    <location>
        <position position="174"/>
    </location>
</feature>
<feature type="active site" evidence="1">
    <location>
        <position position="249"/>
    </location>
</feature>
<feature type="active site" description="Nucleophile" evidence="1">
    <location>
        <position position="370"/>
    </location>
</feature>
<feature type="binding site" evidence="1">
    <location>
        <begin position="19"/>
        <end position="28"/>
    </location>
    <ligand>
        <name>substrate</name>
    </ligand>
</feature>
<feature type="binding site" evidence="1">
    <location>
        <position position="110"/>
    </location>
    <ligand>
        <name>substrate</name>
    </ligand>
</feature>
<feature type="binding site" evidence="1">
    <location>
        <begin position="137"/>
        <end position="138"/>
    </location>
    <ligand>
        <name>substrate</name>
    </ligand>
</feature>
<feature type="binding site" evidence="1">
    <location>
        <position position="213"/>
    </location>
    <ligand>
        <name>substrate</name>
    </ligand>
</feature>
<feature type="binding site" evidence="1">
    <location>
        <position position="251"/>
    </location>
    <ligand>
        <name>substrate</name>
    </ligand>
</feature>
<feature type="binding site" evidence="1">
    <location>
        <position position="364"/>
    </location>
    <ligand>
        <name>substrate</name>
    </ligand>
</feature>
<gene>
    <name evidence="1" type="primary">astB</name>
    <name type="ordered locus">Bxeno_A1519</name>
    <name type="ORF">Bxe_A2919</name>
</gene>